<comment type="function">
    <text evidence="1">With S4 and S12 plays an important role in translational accuracy.</text>
</comment>
<comment type="function">
    <text evidence="1">Located at the back of the 30S subunit body where it stabilizes the conformation of the head with respect to the body.</text>
</comment>
<comment type="subunit">
    <text evidence="1">Part of the 30S ribosomal subunit. Contacts proteins S4 and S8.</text>
</comment>
<comment type="domain">
    <text>The N-terminal domain interacts with the head of the 30S subunit; the C-terminal domain interacts with the body and contacts protein S4. The interaction surface between S4 and S5 is involved in control of translational fidelity.</text>
</comment>
<comment type="similarity">
    <text evidence="1">Belongs to the universal ribosomal protein uS5 family.</text>
</comment>
<feature type="chain" id="PRO_0000323125" description="Small ribosomal subunit protein uS5">
    <location>
        <begin position="1"/>
        <end position="166"/>
    </location>
</feature>
<feature type="domain" description="S5 DRBM" evidence="1">
    <location>
        <begin position="11"/>
        <end position="74"/>
    </location>
</feature>
<sequence length="166" mass="17527">MSNEVKKNEELIEKLVSVKRHSKTVKGGRIMSFAALTVVGDGKGRIGVGRGKSREVPAAIQKAMENAKKNMVSVNLNNDTLWYPVVSNHGASKVFMQPASAGTGIIAGGAMRSVFEAVGVHNVLAKTYGSTNPANVVRATIAGLAKIKSPDEIAEKRGLSVEEIQG</sequence>
<reference key="1">
    <citation type="submission" date="2006-03" db="EMBL/GenBank/DDBJ databases">
        <title>Complete genome sequence of Francisella tularensis LVS (Live Vaccine Strain).</title>
        <authorList>
            <person name="Chain P."/>
            <person name="Larimer F."/>
            <person name="Land M."/>
            <person name="Stilwagen S."/>
            <person name="Larsson P."/>
            <person name="Bearden S."/>
            <person name="Chu M."/>
            <person name="Oyston P."/>
            <person name="Forsman M."/>
            <person name="Andersson S."/>
            <person name="Lindler L."/>
            <person name="Titball R."/>
            <person name="Garcia E."/>
        </authorList>
    </citation>
    <scope>NUCLEOTIDE SEQUENCE [LARGE SCALE GENOMIC DNA]</scope>
    <source>
        <strain>LVS</strain>
    </source>
</reference>
<accession>Q2A5F3</accession>
<gene>
    <name evidence="1" type="primary">rpsE</name>
    <name type="ordered locus">FTL_0253</name>
</gene>
<proteinExistence type="inferred from homology"/>
<organism>
    <name type="scientific">Francisella tularensis subsp. holarctica (strain LVS)</name>
    <dbReference type="NCBI Taxonomy" id="376619"/>
    <lineage>
        <taxon>Bacteria</taxon>
        <taxon>Pseudomonadati</taxon>
        <taxon>Pseudomonadota</taxon>
        <taxon>Gammaproteobacteria</taxon>
        <taxon>Thiotrichales</taxon>
        <taxon>Francisellaceae</taxon>
        <taxon>Francisella</taxon>
    </lineage>
</organism>
<protein>
    <recommendedName>
        <fullName evidence="1">Small ribosomal subunit protein uS5</fullName>
    </recommendedName>
    <alternativeName>
        <fullName evidence="2">30S ribosomal protein S5</fullName>
    </alternativeName>
</protein>
<name>RS5_FRATH</name>
<dbReference type="EMBL" id="AM233362">
    <property type="protein sequence ID" value="CAJ78694.1"/>
    <property type="molecule type" value="Genomic_DNA"/>
</dbReference>
<dbReference type="RefSeq" id="WP_003014361.1">
    <property type="nucleotide sequence ID" value="NZ_CP009694.1"/>
</dbReference>
<dbReference type="SMR" id="Q2A5F3"/>
<dbReference type="KEGG" id="ftl:FTL_0253"/>
<dbReference type="Proteomes" id="UP000001944">
    <property type="component" value="Chromosome"/>
</dbReference>
<dbReference type="GO" id="GO:0015935">
    <property type="term" value="C:small ribosomal subunit"/>
    <property type="evidence" value="ECO:0007669"/>
    <property type="project" value="InterPro"/>
</dbReference>
<dbReference type="GO" id="GO:0019843">
    <property type="term" value="F:rRNA binding"/>
    <property type="evidence" value="ECO:0007669"/>
    <property type="project" value="UniProtKB-UniRule"/>
</dbReference>
<dbReference type="GO" id="GO:0003735">
    <property type="term" value="F:structural constituent of ribosome"/>
    <property type="evidence" value="ECO:0007669"/>
    <property type="project" value="InterPro"/>
</dbReference>
<dbReference type="GO" id="GO:0006412">
    <property type="term" value="P:translation"/>
    <property type="evidence" value="ECO:0007669"/>
    <property type="project" value="UniProtKB-UniRule"/>
</dbReference>
<dbReference type="FunFam" id="3.30.160.20:FF:000001">
    <property type="entry name" value="30S ribosomal protein S5"/>
    <property type="match status" value="1"/>
</dbReference>
<dbReference type="FunFam" id="3.30.230.10:FF:000002">
    <property type="entry name" value="30S ribosomal protein S5"/>
    <property type="match status" value="1"/>
</dbReference>
<dbReference type="Gene3D" id="3.30.160.20">
    <property type="match status" value="1"/>
</dbReference>
<dbReference type="Gene3D" id="3.30.230.10">
    <property type="match status" value="1"/>
</dbReference>
<dbReference type="HAMAP" id="MF_01307_B">
    <property type="entry name" value="Ribosomal_uS5_B"/>
    <property type="match status" value="1"/>
</dbReference>
<dbReference type="InterPro" id="IPR020568">
    <property type="entry name" value="Ribosomal_Su5_D2-typ_SF"/>
</dbReference>
<dbReference type="InterPro" id="IPR000851">
    <property type="entry name" value="Ribosomal_uS5"/>
</dbReference>
<dbReference type="InterPro" id="IPR005712">
    <property type="entry name" value="Ribosomal_uS5_bac-type"/>
</dbReference>
<dbReference type="InterPro" id="IPR005324">
    <property type="entry name" value="Ribosomal_uS5_C"/>
</dbReference>
<dbReference type="InterPro" id="IPR013810">
    <property type="entry name" value="Ribosomal_uS5_N"/>
</dbReference>
<dbReference type="InterPro" id="IPR018192">
    <property type="entry name" value="Ribosomal_uS5_N_CS"/>
</dbReference>
<dbReference type="InterPro" id="IPR014721">
    <property type="entry name" value="Ribsml_uS5_D2-typ_fold_subgr"/>
</dbReference>
<dbReference type="NCBIfam" id="TIGR01021">
    <property type="entry name" value="rpsE_bact"/>
    <property type="match status" value="1"/>
</dbReference>
<dbReference type="PANTHER" id="PTHR48277">
    <property type="entry name" value="MITOCHONDRIAL RIBOSOMAL PROTEIN S5"/>
    <property type="match status" value="1"/>
</dbReference>
<dbReference type="PANTHER" id="PTHR48277:SF1">
    <property type="entry name" value="MITOCHONDRIAL RIBOSOMAL PROTEIN S5"/>
    <property type="match status" value="1"/>
</dbReference>
<dbReference type="Pfam" id="PF00333">
    <property type="entry name" value="Ribosomal_S5"/>
    <property type="match status" value="1"/>
</dbReference>
<dbReference type="Pfam" id="PF03719">
    <property type="entry name" value="Ribosomal_S5_C"/>
    <property type="match status" value="1"/>
</dbReference>
<dbReference type="SUPFAM" id="SSF54768">
    <property type="entry name" value="dsRNA-binding domain-like"/>
    <property type="match status" value="1"/>
</dbReference>
<dbReference type="SUPFAM" id="SSF54211">
    <property type="entry name" value="Ribosomal protein S5 domain 2-like"/>
    <property type="match status" value="1"/>
</dbReference>
<dbReference type="PROSITE" id="PS00585">
    <property type="entry name" value="RIBOSOMAL_S5"/>
    <property type="match status" value="1"/>
</dbReference>
<dbReference type="PROSITE" id="PS50881">
    <property type="entry name" value="S5_DSRBD"/>
    <property type="match status" value="1"/>
</dbReference>
<evidence type="ECO:0000255" key="1">
    <source>
        <dbReference type="HAMAP-Rule" id="MF_01307"/>
    </source>
</evidence>
<evidence type="ECO:0000305" key="2"/>
<keyword id="KW-1185">Reference proteome</keyword>
<keyword id="KW-0687">Ribonucleoprotein</keyword>
<keyword id="KW-0689">Ribosomal protein</keyword>
<keyword id="KW-0694">RNA-binding</keyword>
<keyword id="KW-0699">rRNA-binding</keyword>